<reference key="1">
    <citation type="journal article" date="1996" name="Yeast">
        <title>Sequence analysis of a 13.4 kbp fragment from the left arm of chromosome XV reveals a malate dehydrogenase gene, a putative Ser/Thr protein kinase, the ribosomal L25 gene and four new open reading frames.</title>
        <authorList>
            <person name="Casamayor A."/>
            <person name="Khalid H."/>
            <person name="Balcells L."/>
            <person name="Aldea M."/>
            <person name="Casas C."/>
            <person name="Herrero E."/>
            <person name="Arino J."/>
        </authorList>
    </citation>
    <scope>NUCLEOTIDE SEQUENCE [GENOMIC DNA]</scope>
    <source>
        <strain>ATCC 96604 / S288c / FY1679</strain>
    </source>
</reference>
<reference key="2">
    <citation type="journal article" date="1997" name="Nature">
        <title>The nucleotide sequence of Saccharomyces cerevisiae chromosome XV.</title>
        <authorList>
            <person name="Dujon B."/>
            <person name="Albermann K."/>
            <person name="Aldea M."/>
            <person name="Alexandraki D."/>
            <person name="Ansorge W."/>
            <person name="Arino J."/>
            <person name="Benes V."/>
            <person name="Bohn C."/>
            <person name="Bolotin-Fukuhara M."/>
            <person name="Bordonne R."/>
            <person name="Boyer J."/>
            <person name="Camasses A."/>
            <person name="Casamayor A."/>
            <person name="Casas C."/>
            <person name="Cheret G."/>
            <person name="Cziepluch C."/>
            <person name="Daignan-Fornier B."/>
            <person name="Dang V.-D."/>
            <person name="de Haan M."/>
            <person name="Delius H."/>
            <person name="Durand P."/>
            <person name="Fairhead C."/>
            <person name="Feldmann H."/>
            <person name="Gaillon L."/>
            <person name="Galisson F."/>
            <person name="Gamo F.-J."/>
            <person name="Gancedo C."/>
            <person name="Goffeau A."/>
            <person name="Goulding S.E."/>
            <person name="Grivell L.A."/>
            <person name="Habbig B."/>
            <person name="Hand N.J."/>
            <person name="Hani J."/>
            <person name="Hattenhorst U."/>
            <person name="Hebling U."/>
            <person name="Hernando Y."/>
            <person name="Herrero E."/>
            <person name="Heumann K."/>
            <person name="Hiesel R."/>
            <person name="Hilger F."/>
            <person name="Hofmann B."/>
            <person name="Hollenberg C.P."/>
            <person name="Hughes B."/>
            <person name="Jauniaux J.-C."/>
            <person name="Kalogeropoulos A."/>
            <person name="Katsoulou C."/>
            <person name="Kordes E."/>
            <person name="Lafuente M.J."/>
            <person name="Landt O."/>
            <person name="Louis E.J."/>
            <person name="Maarse A.C."/>
            <person name="Madania A."/>
            <person name="Mannhaupt G."/>
            <person name="Marck C."/>
            <person name="Martin R.P."/>
            <person name="Mewes H.-W."/>
            <person name="Michaux G."/>
            <person name="Paces V."/>
            <person name="Parle-McDermott A.G."/>
            <person name="Pearson B.M."/>
            <person name="Perrin A."/>
            <person name="Pettersson B."/>
            <person name="Poch O."/>
            <person name="Pohl T.M."/>
            <person name="Poirey R."/>
            <person name="Portetelle D."/>
            <person name="Pujol A."/>
            <person name="Purnelle B."/>
            <person name="Ramezani Rad M."/>
            <person name="Rechmann S."/>
            <person name="Schwager C."/>
            <person name="Schweizer M."/>
            <person name="Sor F."/>
            <person name="Sterky F."/>
            <person name="Tarassov I.A."/>
            <person name="Teodoru C."/>
            <person name="Tettelin H."/>
            <person name="Thierry A."/>
            <person name="Tobiasch E."/>
            <person name="Tzermia M."/>
            <person name="Uhlen M."/>
            <person name="Unseld M."/>
            <person name="Valens M."/>
            <person name="Vandenbol M."/>
            <person name="Vetter I."/>
            <person name="Vlcek C."/>
            <person name="Voet M."/>
            <person name="Volckaert G."/>
            <person name="Voss H."/>
            <person name="Wambutt R."/>
            <person name="Wedler H."/>
            <person name="Wiemann S."/>
            <person name="Winsor B."/>
            <person name="Wolfe K.H."/>
            <person name="Zollner A."/>
            <person name="Zumstein E."/>
            <person name="Kleine K."/>
        </authorList>
    </citation>
    <scope>NUCLEOTIDE SEQUENCE [LARGE SCALE GENOMIC DNA]</scope>
    <source>
        <strain>ATCC 204508 / S288c</strain>
    </source>
</reference>
<reference key="3">
    <citation type="journal article" date="2014" name="G3 (Bethesda)">
        <title>The reference genome sequence of Saccharomyces cerevisiae: Then and now.</title>
        <authorList>
            <person name="Engel S.R."/>
            <person name="Dietrich F.S."/>
            <person name="Fisk D.G."/>
            <person name="Binkley G."/>
            <person name="Balakrishnan R."/>
            <person name="Costanzo M.C."/>
            <person name="Dwight S.S."/>
            <person name="Hitz B.C."/>
            <person name="Karra K."/>
            <person name="Nash R.S."/>
            <person name="Weng S."/>
            <person name="Wong E.D."/>
            <person name="Lloyd P."/>
            <person name="Skrzypek M.S."/>
            <person name="Miyasato S.R."/>
            <person name="Simison M."/>
            <person name="Cherry J.M."/>
        </authorList>
    </citation>
    <scope>GENOME REANNOTATION</scope>
    <source>
        <strain>ATCC 204508 / S288c</strain>
    </source>
</reference>
<reference key="4">
    <citation type="journal article" date="2007" name="Genome Res.">
        <title>Approaching a complete repository of sequence-verified protein-encoding clones for Saccharomyces cerevisiae.</title>
        <authorList>
            <person name="Hu Y."/>
            <person name="Rolfs A."/>
            <person name="Bhullar B."/>
            <person name="Murthy T.V.S."/>
            <person name="Zhu C."/>
            <person name="Berger M.F."/>
            <person name="Camargo A.A."/>
            <person name="Kelley F."/>
            <person name="McCarron S."/>
            <person name="Jepson D."/>
            <person name="Richardson A."/>
            <person name="Raphael J."/>
            <person name="Moreira D."/>
            <person name="Taycher E."/>
            <person name="Zuo D."/>
            <person name="Mohr S."/>
            <person name="Kane M.F."/>
            <person name="Williamson J."/>
            <person name="Simpson A.J.G."/>
            <person name="Bulyk M.L."/>
            <person name="Harlow E."/>
            <person name="Marsischky G."/>
            <person name="Kolodner R.D."/>
            <person name="LaBaer J."/>
        </authorList>
    </citation>
    <scope>NUCLEOTIDE SEQUENCE [GENOMIC DNA]</scope>
    <source>
        <strain>ATCC 204508 / S288c</strain>
    </source>
</reference>
<reference key="5">
    <citation type="journal article" date="2002" name="Mol. Biol. Cell">
        <title>Genomic screen for vacuolar protein sorting genes in Saccharomyces cerevisiae.</title>
        <authorList>
            <person name="Bonangelino C.J."/>
            <person name="Chavez E.M."/>
            <person name="Bonifacino J.S."/>
        </authorList>
    </citation>
    <scope>FUNCTION</scope>
</reference>
<reference key="6">
    <citation type="journal article" date="2003" name="Nature">
        <title>Global analysis of protein localization in budding yeast.</title>
        <authorList>
            <person name="Huh W.-K."/>
            <person name="Falvo J.V."/>
            <person name="Gerke L.C."/>
            <person name="Carroll A.S."/>
            <person name="Howson R.W."/>
            <person name="Weissman J.S."/>
            <person name="O'Shea E.K."/>
        </authorList>
    </citation>
    <scope>SUBCELLULAR LOCATION [LARGE SCALE ANALYSIS]</scope>
</reference>
<reference key="7">
    <citation type="journal article" date="2003" name="Nature">
        <title>Global analysis of protein expression in yeast.</title>
        <authorList>
            <person name="Ghaemmaghami S."/>
            <person name="Huh W.-K."/>
            <person name="Bower K."/>
            <person name="Howson R.W."/>
            <person name="Belle A."/>
            <person name="Dephoure N."/>
            <person name="O'Shea E.K."/>
            <person name="Weissman J.S."/>
        </authorList>
    </citation>
    <scope>LEVEL OF PROTEIN EXPRESSION [LARGE SCALE ANALYSIS]</scope>
</reference>
<reference key="8">
    <citation type="journal article" date="2003" name="Proc. Natl. Acad. Sci. U.S.A.">
        <title>The proteome of Saccharomyces cerevisiae mitochondria.</title>
        <authorList>
            <person name="Sickmann A."/>
            <person name="Reinders J."/>
            <person name="Wagner Y."/>
            <person name="Joppich C."/>
            <person name="Zahedi R.P."/>
            <person name="Meyer H.E."/>
            <person name="Schoenfisch B."/>
            <person name="Perschil I."/>
            <person name="Chacinska A."/>
            <person name="Guiard B."/>
            <person name="Rehling P."/>
            <person name="Pfanner N."/>
            <person name="Meisinger C."/>
        </authorList>
    </citation>
    <scope>SUBCELLULAR LOCATION [LARGE SCALE ANALYSIS]</scope>
    <source>
        <strain>ATCC 76625 / YPH499</strain>
    </source>
</reference>
<reference key="9">
    <citation type="journal article" date="2005" name="Mol. Cell. Proteomics">
        <title>Quantitative phosphoproteomics applied to the yeast pheromone signaling pathway.</title>
        <authorList>
            <person name="Gruhler A."/>
            <person name="Olsen J.V."/>
            <person name="Mohammed S."/>
            <person name="Mortensen P."/>
            <person name="Faergeman N.J."/>
            <person name="Mann M."/>
            <person name="Jensen O.N."/>
        </authorList>
    </citation>
    <scope>ACETYLATION [LARGE SCALE ANALYSIS] AT MET-1</scope>
    <scope>PHOSPHORYLATION [LARGE SCALE ANALYSIS] AT SER-8</scope>
    <scope>IDENTIFICATION BY MASS SPECTROMETRY [LARGE SCALE ANALYSIS]</scope>
    <source>
        <strain>YAL6B</strain>
    </source>
</reference>
<reference key="10">
    <citation type="journal article" date="2008" name="Mol. Cell. Proteomics">
        <title>A multidimensional chromatography technology for in-depth phosphoproteome analysis.</title>
        <authorList>
            <person name="Albuquerque C.P."/>
            <person name="Smolka M.B."/>
            <person name="Payne S.H."/>
            <person name="Bafna V."/>
            <person name="Eng J."/>
            <person name="Zhou H."/>
        </authorList>
    </citation>
    <scope>PHOSPHORYLATION [LARGE SCALE ANALYSIS] AT SER-8</scope>
    <scope>IDENTIFICATION BY MASS SPECTROMETRY [LARGE SCALE ANALYSIS]</scope>
</reference>
<reference key="11">
    <citation type="journal article" date="2012" name="Proc. Natl. Acad. Sci. U.S.A.">
        <title>N-terminal acetylome analyses and functional insights of the N-terminal acetyltransferase NatB.</title>
        <authorList>
            <person name="Van Damme P."/>
            <person name="Lasa M."/>
            <person name="Polevoda B."/>
            <person name="Gazquez C."/>
            <person name="Elosegui-Artola A."/>
            <person name="Kim D.S."/>
            <person name="De Juan-Pardo E."/>
            <person name="Demeyer K."/>
            <person name="Hole K."/>
            <person name="Larrea E."/>
            <person name="Timmerman E."/>
            <person name="Prieto J."/>
            <person name="Arnesen T."/>
            <person name="Sherman F."/>
            <person name="Gevaert K."/>
            <person name="Aldabe R."/>
        </authorList>
    </citation>
    <scope>ACETYLATION [LARGE SCALE ANALYSIS] AT MET-1</scope>
    <scope>IDENTIFICATION BY MASS SPECTROMETRY [LARGE SCALE ANALYSIS]</scope>
</reference>
<dbReference type="EMBL" id="Z74871">
    <property type="protein sequence ID" value="CAA99148.1"/>
    <property type="molecule type" value="Genomic_DNA"/>
</dbReference>
<dbReference type="EMBL" id="U41293">
    <property type="protein sequence ID" value="AAC49463.1"/>
    <property type="molecule type" value="Genomic_DNA"/>
</dbReference>
<dbReference type="EMBL" id="AY692833">
    <property type="protein sequence ID" value="AAT92852.1"/>
    <property type="molecule type" value="Genomic_DNA"/>
</dbReference>
<dbReference type="EMBL" id="BK006948">
    <property type="protein sequence ID" value="DAA10655.1"/>
    <property type="molecule type" value="Genomic_DNA"/>
</dbReference>
<dbReference type="PIR" id="S63441">
    <property type="entry name" value="S63441"/>
</dbReference>
<dbReference type="RefSeq" id="NP_014512.1">
    <property type="nucleotide sequence ID" value="NM_001183383.1"/>
</dbReference>
<dbReference type="BioGRID" id="34246">
    <property type="interactions" value="181"/>
</dbReference>
<dbReference type="ComplexPortal" id="CPX-1413">
    <property type="entry name" value="VPS55-VPS68 sorting complex"/>
</dbReference>
<dbReference type="DIP" id="DIP-1732N"/>
<dbReference type="FunCoup" id="Q12016">
    <property type="interactions" value="240"/>
</dbReference>
<dbReference type="IntAct" id="Q12016">
    <property type="interactions" value="19"/>
</dbReference>
<dbReference type="MINT" id="Q12016"/>
<dbReference type="STRING" id="4932.YOL129W"/>
<dbReference type="TCDB" id="9.B.199.1.7">
    <property type="family name" value="the 4 tms pf05225 (pf0225) family"/>
</dbReference>
<dbReference type="GlyCosmos" id="Q12016">
    <property type="glycosylation" value="1 site, No reported glycans"/>
</dbReference>
<dbReference type="GlyGen" id="Q12016">
    <property type="glycosylation" value="1 site"/>
</dbReference>
<dbReference type="iPTMnet" id="Q12016"/>
<dbReference type="PaxDb" id="4932-YOL129W"/>
<dbReference type="PeptideAtlas" id="Q12016"/>
<dbReference type="EnsemblFungi" id="YOL129W_mRNA">
    <property type="protein sequence ID" value="YOL129W"/>
    <property type="gene ID" value="YOL129W"/>
</dbReference>
<dbReference type="GeneID" id="853991"/>
<dbReference type="KEGG" id="sce:YOL129W"/>
<dbReference type="AGR" id="SGD:S000005489"/>
<dbReference type="SGD" id="S000005489">
    <property type="gene designation" value="VPS68"/>
</dbReference>
<dbReference type="VEuPathDB" id="FungiDB:YOL129W"/>
<dbReference type="eggNOG" id="KOG3393">
    <property type="taxonomic scope" value="Eukaryota"/>
</dbReference>
<dbReference type="GeneTree" id="ENSGT00940000171494"/>
<dbReference type="HOGENOM" id="CLU_096876_0_1_1"/>
<dbReference type="InParanoid" id="Q12016"/>
<dbReference type="OMA" id="VHITFVD"/>
<dbReference type="OrthoDB" id="268928at2759"/>
<dbReference type="BioCyc" id="YEAST:G3O-33524-MONOMER"/>
<dbReference type="BioGRID-ORCS" id="853991">
    <property type="hits" value="0 hits in 10 CRISPR screens"/>
</dbReference>
<dbReference type="PRO" id="PR:Q12016"/>
<dbReference type="Proteomes" id="UP000002311">
    <property type="component" value="Chromosome XV"/>
</dbReference>
<dbReference type="RNAct" id="Q12016">
    <property type="molecule type" value="protein"/>
</dbReference>
<dbReference type="GO" id="GO:0005768">
    <property type="term" value="C:endosome"/>
    <property type="evidence" value="ECO:0000314"/>
    <property type="project" value="SGD"/>
</dbReference>
<dbReference type="GO" id="GO:0000329">
    <property type="term" value="C:fungal-type vacuole membrane"/>
    <property type="evidence" value="ECO:0000314"/>
    <property type="project" value="SGD"/>
</dbReference>
<dbReference type="GO" id="GO:0005739">
    <property type="term" value="C:mitochondrion"/>
    <property type="evidence" value="ECO:0007005"/>
    <property type="project" value="SGD"/>
</dbReference>
<dbReference type="GO" id="GO:0034424">
    <property type="term" value="C:Vps55/Vps68 complex"/>
    <property type="evidence" value="ECO:0000314"/>
    <property type="project" value="SGD"/>
</dbReference>
<dbReference type="GO" id="GO:0032511">
    <property type="term" value="P:late endosome to vacuole transport via multivesicular body sorting pathway"/>
    <property type="evidence" value="ECO:0000315"/>
    <property type="project" value="SGD"/>
</dbReference>
<dbReference type="GO" id="GO:0006623">
    <property type="term" value="P:protein targeting to vacuole"/>
    <property type="evidence" value="ECO:0007001"/>
    <property type="project" value="SGD"/>
</dbReference>
<dbReference type="InterPro" id="IPR007919">
    <property type="entry name" value="UPF0220"/>
</dbReference>
<dbReference type="PANTHER" id="PTHR13180">
    <property type="entry name" value="SMALL MEMBRANE PROTEIN-RELATED"/>
    <property type="match status" value="1"/>
</dbReference>
<dbReference type="Pfam" id="PF05255">
    <property type="entry name" value="UPF0220"/>
    <property type="match status" value="1"/>
</dbReference>
<sequence>MEADDHVSLFRFPFKIPTFRGIRKGGVYLSGALYALGFWIFLDAVLYSRYSNASDVHVTFIDWIPFLCSTLGTLIVNSIEKNRLLQGALSSDGGAFGSGVGDLDSSMAWQARTVLFFGFALLAGGLSGSIVVLIIKFLVKDYNTYPTLGMGVNNVLGNVCILLSCVVLWIAQNVEDEYSYSLTL</sequence>
<evidence type="ECO:0000255" key="1"/>
<evidence type="ECO:0000269" key="2">
    <source>
    </source>
</evidence>
<evidence type="ECO:0000269" key="3">
    <source>
    </source>
</evidence>
<evidence type="ECO:0000305" key="4"/>
<evidence type="ECO:0007744" key="5">
    <source>
    </source>
</evidence>
<evidence type="ECO:0007744" key="6">
    <source>
    </source>
</evidence>
<evidence type="ECO:0007744" key="7">
    <source>
    </source>
</evidence>
<keyword id="KW-0007">Acetylation</keyword>
<keyword id="KW-0325">Glycoprotein</keyword>
<keyword id="KW-0472">Membrane</keyword>
<keyword id="KW-0496">Mitochondrion</keyword>
<keyword id="KW-0597">Phosphoprotein</keyword>
<keyword id="KW-0653">Protein transport</keyword>
<keyword id="KW-1185">Reference proteome</keyword>
<keyword id="KW-0812">Transmembrane</keyword>
<keyword id="KW-1133">Transmembrane helix</keyword>
<keyword id="KW-0813">Transport</keyword>
<keyword id="KW-0926">Vacuole</keyword>
<accession>Q12016</accession>
<accession>D6W1T9</accession>
<protein>
    <recommendedName>
        <fullName>Vacuolar protein sorting-associated protein 68</fullName>
    </recommendedName>
</protein>
<proteinExistence type="evidence at protein level"/>
<organism>
    <name type="scientific">Saccharomyces cerevisiae (strain ATCC 204508 / S288c)</name>
    <name type="common">Baker's yeast</name>
    <dbReference type="NCBI Taxonomy" id="559292"/>
    <lineage>
        <taxon>Eukaryota</taxon>
        <taxon>Fungi</taxon>
        <taxon>Dikarya</taxon>
        <taxon>Ascomycota</taxon>
        <taxon>Saccharomycotina</taxon>
        <taxon>Saccharomycetes</taxon>
        <taxon>Saccharomycetales</taxon>
        <taxon>Saccharomycetaceae</taxon>
        <taxon>Saccharomyces</taxon>
    </lineage>
</organism>
<gene>
    <name type="primary">VPS68</name>
    <name type="ordered locus">YOL129W</name>
</gene>
<comment type="function">
    <text evidence="2">Involved in vacuolar protein sorting.</text>
</comment>
<comment type="interaction">
    <interactant intactId="EBI-29309">
        <id>Q12016</id>
    </interactant>
    <interactant intactId="EBI-25497">
        <id>P47111</id>
        <label>VPS55</label>
    </interactant>
    <organismsDiffer>false</organismsDiffer>
    <experiments>3</experiments>
</comment>
<comment type="subcellular location">
    <subcellularLocation>
        <location>Vacuole membrane</location>
        <topology>Multi-pass membrane protein</topology>
    </subcellularLocation>
    <subcellularLocation>
        <location evidence="4">Mitochondrion</location>
    </subcellularLocation>
</comment>
<comment type="miscellaneous">
    <text evidence="3">Present with 1900 molecules/cell in log phase SD medium.</text>
</comment>
<comment type="similarity">
    <text evidence="4">Belongs to the UPF0220 family.</text>
</comment>
<name>VPS68_YEAST</name>
<feature type="chain" id="PRO_0000174187" description="Vacuolar protein sorting-associated protein 68">
    <location>
        <begin position="1"/>
        <end position="184"/>
    </location>
</feature>
<feature type="transmembrane region" description="Helical" evidence="1">
    <location>
        <begin position="26"/>
        <end position="46"/>
    </location>
</feature>
<feature type="transmembrane region" description="Helical" evidence="1">
    <location>
        <begin position="56"/>
        <end position="76"/>
    </location>
</feature>
<feature type="transmembrane region" description="Helical" evidence="1">
    <location>
        <begin position="115"/>
        <end position="135"/>
    </location>
</feature>
<feature type="transmembrane region" description="Helical" evidence="1">
    <location>
        <begin position="150"/>
        <end position="170"/>
    </location>
</feature>
<feature type="modified residue" description="N-acetylmethionine" evidence="5 7">
    <location>
        <position position="1"/>
    </location>
</feature>
<feature type="modified residue" description="Phosphoserine" evidence="5 6">
    <location>
        <position position="8"/>
    </location>
</feature>
<feature type="glycosylation site" description="N-linked (GlcNAc...) asparagine" evidence="1">
    <location>
        <position position="52"/>
    </location>
</feature>